<reference key="1">
    <citation type="journal article" date="2000" name="Nature">
        <title>DNA sequence of both chromosomes of the cholera pathogen Vibrio cholerae.</title>
        <authorList>
            <person name="Heidelberg J.F."/>
            <person name="Eisen J.A."/>
            <person name="Nelson W.C."/>
            <person name="Clayton R.A."/>
            <person name="Gwinn M.L."/>
            <person name="Dodson R.J."/>
            <person name="Haft D.H."/>
            <person name="Hickey E.K."/>
            <person name="Peterson J.D."/>
            <person name="Umayam L.A."/>
            <person name="Gill S.R."/>
            <person name="Nelson K.E."/>
            <person name="Read T.D."/>
            <person name="Tettelin H."/>
            <person name="Richardson D.L."/>
            <person name="Ermolaeva M.D."/>
            <person name="Vamathevan J.J."/>
            <person name="Bass S."/>
            <person name="Qin H."/>
            <person name="Dragoi I."/>
            <person name="Sellers P."/>
            <person name="McDonald L.A."/>
            <person name="Utterback T.R."/>
            <person name="Fleischmann R.D."/>
            <person name="Nierman W.C."/>
            <person name="White O."/>
            <person name="Salzberg S.L."/>
            <person name="Smith H.O."/>
            <person name="Colwell R.R."/>
            <person name="Mekalanos J.J."/>
            <person name="Venter J.C."/>
            <person name="Fraser C.M."/>
        </authorList>
    </citation>
    <scope>NUCLEOTIDE SEQUENCE [LARGE SCALE GENOMIC DNA]</scope>
    <source>
        <strain>ATCC 39315 / El Tor Inaba N16961</strain>
    </source>
</reference>
<organism>
    <name type="scientific">Vibrio cholerae serotype O1 (strain ATCC 39315 / El Tor Inaba N16961)</name>
    <dbReference type="NCBI Taxonomy" id="243277"/>
    <lineage>
        <taxon>Bacteria</taxon>
        <taxon>Pseudomonadati</taxon>
        <taxon>Pseudomonadota</taxon>
        <taxon>Gammaproteobacteria</taxon>
        <taxon>Vibrionales</taxon>
        <taxon>Vibrionaceae</taxon>
        <taxon>Vibrio</taxon>
    </lineage>
</organism>
<dbReference type="EC" id="4.1.3.27"/>
<dbReference type="EMBL" id="AE003852">
    <property type="protein sequence ID" value="AAF94333.1"/>
    <property type="molecule type" value="Genomic_DNA"/>
</dbReference>
<dbReference type="PIR" id="A82233">
    <property type="entry name" value="A82233"/>
</dbReference>
<dbReference type="RefSeq" id="NP_230819.1">
    <property type="nucleotide sequence ID" value="NC_002505.1"/>
</dbReference>
<dbReference type="RefSeq" id="WP_001030227.1">
    <property type="nucleotide sequence ID" value="NZ_LT906614.1"/>
</dbReference>
<dbReference type="SMR" id="Q9KST2"/>
<dbReference type="STRING" id="243277.VC_1174"/>
<dbReference type="DNASU" id="2614607"/>
<dbReference type="EnsemblBacteria" id="AAF94333">
    <property type="protein sequence ID" value="AAF94333"/>
    <property type="gene ID" value="VC_1174"/>
</dbReference>
<dbReference type="KEGG" id="vch:VC_1174"/>
<dbReference type="PATRIC" id="fig|243277.26.peg.1123"/>
<dbReference type="eggNOG" id="COG0147">
    <property type="taxonomic scope" value="Bacteria"/>
</dbReference>
<dbReference type="HOGENOM" id="CLU_006493_9_4_6"/>
<dbReference type="UniPathway" id="UPA00035">
    <property type="reaction ID" value="UER00040"/>
</dbReference>
<dbReference type="Proteomes" id="UP000000584">
    <property type="component" value="Chromosome 1"/>
</dbReference>
<dbReference type="GO" id="GO:0004049">
    <property type="term" value="F:anthranilate synthase activity"/>
    <property type="evidence" value="ECO:0007669"/>
    <property type="project" value="UniProtKB-EC"/>
</dbReference>
<dbReference type="GO" id="GO:0046872">
    <property type="term" value="F:metal ion binding"/>
    <property type="evidence" value="ECO:0007669"/>
    <property type="project" value="UniProtKB-KW"/>
</dbReference>
<dbReference type="GO" id="GO:0000162">
    <property type="term" value="P:L-tryptophan biosynthetic process"/>
    <property type="evidence" value="ECO:0000318"/>
    <property type="project" value="GO_Central"/>
</dbReference>
<dbReference type="FunFam" id="3.60.120.10:FF:000006">
    <property type="entry name" value="Anthranilate synthase component 1"/>
    <property type="match status" value="1"/>
</dbReference>
<dbReference type="Gene3D" id="3.60.120.10">
    <property type="entry name" value="Anthranilate synthase"/>
    <property type="match status" value="1"/>
</dbReference>
<dbReference type="InterPro" id="IPR005801">
    <property type="entry name" value="ADC_synthase"/>
</dbReference>
<dbReference type="InterPro" id="IPR019999">
    <property type="entry name" value="Anth_synth_I-like"/>
</dbReference>
<dbReference type="InterPro" id="IPR006805">
    <property type="entry name" value="Anth_synth_I_N"/>
</dbReference>
<dbReference type="InterPro" id="IPR005257">
    <property type="entry name" value="Anth_synth_I_TrpE"/>
</dbReference>
<dbReference type="InterPro" id="IPR015890">
    <property type="entry name" value="Chorismate_C"/>
</dbReference>
<dbReference type="NCBIfam" id="NF010079">
    <property type="entry name" value="PRK13564.1"/>
    <property type="match status" value="1"/>
</dbReference>
<dbReference type="NCBIfam" id="TIGR00565">
    <property type="entry name" value="trpE_proteo"/>
    <property type="match status" value="1"/>
</dbReference>
<dbReference type="PANTHER" id="PTHR11236">
    <property type="entry name" value="AMINOBENZOATE/ANTHRANILATE SYNTHASE"/>
    <property type="match status" value="1"/>
</dbReference>
<dbReference type="PANTHER" id="PTHR11236:SF49">
    <property type="entry name" value="ANTHRANILATE SYNTHASE COMPONENT 1"/>
    <property type="match status" value="1"/>
</dbReference>
<dbReference type="Pfam" id="PF04715">
    <property type="entry name" value="Anth_synt_I_N"/>
    <property type="match status" value="1"/>
</dbReference>
<dbReference type="Pfam" id="PF00425">
    <property type="entry name" value="Chorismate_bind"/>
    <property type="match status" value="1"/>
</dbReference>
<dbReference type="PIRSF" id="PIRSF001373">
    <property type="entry name" value="TrpE"/>
    <property type="match status" value="1"/>
</dbReference>
<dbReference type="PRINTS" id="PR00095">
    <property type="entry name" value="ANTSNTHASEI"/>
</dbReference>
<dbReference type="SUPFAM" id="SSF56322">
    <property type="entry name" value="ADC synthase"/>
    <property type="match status" value="1"/>
</dbReference>
<comment type="function">
    <text evidence="1">Part of a heterotetrameric complex that catalyzes the two-step biosynthesis of anthranilate, an intermediate in the biosynthesis of L-tryptophan. In the first step, the glutamine-binding beta subunit (TrpG) of anthranilate synthase (AS) provides the glutamine amidotransferase activity which generates ammonia as a substrate that, along with chorismate, is used in the second step, catalyzed by the large alpha subunit of AS (TrpE) to produce anthranilate. In the absence of TrpG, TrpE can synthesize anthranilate directly from chorismate and high concentrations of ammonia (By similarity).</text>
</comment>
<comment type="catalytic activity">
    <reaction>
        <text>chorismate + L-glutamine = anthranilate + pyruvate + L-glutamate + H(+)</text>
        <dbReference type="Rhea" id="RHEA:21732"/>
        <dbReference type="ChEBI" id="CHEBI:15361"/>
        <dbReference type="ChEBI" id="CHEBI:15378"/>
        <dbReference type="ChEBI" id="CHEBI:16567"/>
        <dbReference type="ChEBI" id="CHEBI:29748"/>
        <dbReference type="ChEBI" id="CHEBI:29985"/>
        <dbReference type="ChEBI" id="CHEBI:58359"/>
        <dbReference type="EC" id="4.1.3.27"/>
    </reaction>
</comment>
<comment type="cofactor">
    <cofactor evidence="2">
        <name>Mg(2+)</name>
        <dbReference type="ChEBI" id="CHEBI:18420"/>
    </cofactor>
    <text evidence="2">Binds 1 Mg(2+) ion per subunit.</text>
</comment>
<comment type="activity regulation">
    <text evidence="1">Feedback inhibited by tryptophan.</text>
</comment>
<comment type="pathway">
    <text>Amino-acid biosynthesis; L-tryptophan biosynthesis; L-tryptophan from chorismate: step 1/5.</text>
</comment>
<comment type="subunit">
    <text evidence="1">Heterotetramer consisting of two non-identical subunits: a beta subunit (TrpG) and a large alpha subunit (TrpE).</text>
</comment>
<comment type="similarity">
    <text evidence="3">Belongs to the anthranilate synthase component I family.</text>
</comment>
<accession>Q9KST2</accession>
<feature type="chain" id="PRO_0000154118" description="Anthranilate synthase component 1">
    <location>
        <begin position="1"/>
        <end position="523"/>
    </location>
</feature>
<feature type="binding site" evidence="2">
    <location>
        <position position="45"/>
    </location>
    <ligand>
        <name>L-tryptophan</name>
        <dbReference type="ChEBI" id="CHEBI:57912"/>
    </ligand>
</feature>
<feature type="binding site" evidence="2">
    <location>
        <begin position="296"/>
        <end position="298"/>
    </location>
    <ligand>
        <name>L-tryptophan</name>
        <dbReference type="ChEBI" id="CHEBI:57912"/>
    </ligand>
</feature>
<feature type="binding site" evidence="2">
    <location>
        <begin position="333"/>
        <end position="334"/>
    </location>
    <ligand>
        <name>chorismate</name>
        <dbReference type="ChEBI" id="CHEBI:29748"/>
    </ligand>
</feature>
<feature type="binding site" evidence="2">
    <location>
        <position position="366"/>
    </location>
    <ligand>
        <name>Mg(2+)</name>
        <dbReference type="ChEBI" id="CHEBI:18420"/>
    </ligand>
</feature>
<feature type="binding site" evidence="2">
    <location>
        <position position="454"/>
    </location>
    <ligand>
        <name>chorismate</name>
        <dbReference type="ChEBI" id="CHEBI:29748"/>
    </ligand>
</feature>
<feature type="binding site" evidence="2">
    <location>
        <position position="474"/>
    </location>
    <ligand>
        <name>chorismate</name>
        <dbReference type="ChEBI" id="CHEBI:29748"/>
    </ligand>
</feature>
<feature type="binding site" evidence="2">
    <location>
        <begin position="488"/>
        <end position="490"/>
    </location>
    <ligand>
        <name>chorismate</name>
        <dbReference type="ChEBI" id="CHEBI:29748"/>
    </ligand>
</feature>
<feature type="binding site" evidence="2">
    <location>
        <position position="490"/>
    </location>
    <ligand>
        <name>chorismate</name>
        <dbReference type="ChEBI" id="CHEBI:29748"/>
    </ligand>
</feature>
<feature type="binding site" evidence="2">
    <location>
        <position position="503"/>
    </location>
    <ligand>
        <name>Mg(2+)</name>
        <dbReference type="ChEBI" id="CHEBI:18420"/>
    </ligand>
</feature>
<name>TRPE_VIBCH</name>
<evidence type="ECO:0000250" key="1"/>
<evidence type="ECO:0000250" key="2">
    <source>
        <dbReference type="UniProtKB" id="P00897"/>
    </source>
</evidence>
<evidence type="ECO:0000305" key="3"/>
<proteinExistence type="inferred from homology"/>
<gene>
    <name type="primary">trpE</name>
    <name type="ordered locus">VC_1174</name>
</gene>
<sequence length="523" mass="58118">MNKAINIKKTAPLEVLHSELPYTQDPTALFHALCAGRSDCLLLESAEIDSKQNLKSLLLVDAAVRIVCEGHQVTYHALSANGQALLNIIHSNLTDRIPCKVEKAKLTLTFSTPCDTLDEDSRLREASSFDALRLVQHSFDLTDHGKFALFLGGLFAYDLVANFEPLGEAPADNQCPDYVFYVAETLMVIDHQRETCQLQATQFQPGDALHSQLKSRMREIRAQVNQKLPLPSAQSLSDVEVTTNISDAAFCDIVRDLKQYVVKGDVFQVVPSRRFRLPCPSPLAAYQRLKQSNPSPYMFYMQDERFTLFGASPESALKYEMHTNQVEIYPIAGTRRRGKRADGSIDFDLDSRIELELRTDKKENAEHMMLVDLARNDVARISQAGTRHVADLLQVDRYSHVMHLVSRVVGQLREDLDALHAYQACMNMGTLTGAPKIRAMQLIRDVEQARRGSYGGAVGYLTGEGDLDTCIVIRSAYVENGIAQVQAGAGVVYDSDPQAEADETRGKAQAVISAILYAHQGKE</sequence>
<keyword id="KW-0028">Amino-acid biosynthesis</keyword>
<keyword id="KW-0057">Aromatic amino acid biosynthesis</keyword>
<keyword id="KW-0456">Lyase</keyword>
<keyword id="KW-0460">Magnesium</keyword>
<keyword id="KW-0479">Metal-binding</keyword>
<keyword id="KW-1185">Reference proteome</keyword>
<keyword id="KW-0822">Tryptophan biosynthesis</keyword>
<protein>
    <recommendedName>
        <fullName>Anthranilate synthase component 1</fullName>
        <shortName>AS</shortName>
        <shortName>ASI</shortName>
        <ecNumber>4.1.3.27</ecNumber>
    </recommendedName>
</protein>